<protein>
    <recommendedName>
        <fullName evidence="1">Anhydro-N-acetylmuramic acid kinase</fullName>
        <ecNumber evidence="1">2.7.1.170</ecNumber>
    </recommendedName>
    <alternativeName>
        <fullName evidence="1">AnhMurNAc kinase</fullName>
    </alternativeName>
</protein>
<feature type="chain" id="PRO_1000165157" description="Anhydro-N-acetylmuramic acid kinase">
    <location>
        <begin position="1"/>
        <end position="382"/>
    </location>
</feature>
<feature type="binding site" evidence="1">
    <location>
        <begin position="22"/>
        <end position="29"/>
    </location>
    <ligand>
        <name>ATP</name>
        <dbReference type="ChEBI" id="CHEBI:30616"/>
    </ligand>
</feature>
<name>ANMK_BURCM</name>
<organism>
    <name type="scientific">Burkholderia ambifaria (strain ATCC BAA-244 / DSM 16087 / CCUG 44356 / LMG 19182 / AMMD)</name>
    <name type="common">Burkholderia cepacia (strain AMMD)</name>
    <dbReference type="NCBI Taxonomy" id="339670"/>
    <lineage>
        <taxon>Bacteria</taxon>
        <taxon>Pseudomonadati</taxon>
        <taxon>Pseudomonadota</taxon>
        <taxon>Betaproteobacteria</taxon>
        <taxon>Burkholderiales</taxon>
        <taxon>Burkholderiaceae</taxon>
        <taxon>Burkholderia</taxon>
        <taxon>Burkholderia cepacia complex</taxon>
    </lineage>
</organism>
<sequence>MPQRHPQPAHPADGIYFGLMSGTSMDGVDGVAVRFETGHAPVVLAEAFVGFAQSLRDALFALQQPGDDEIDRESLAANALVARYAVCCHELQRTAGLSRDEIRAIGVHGQTVRHRPERGYTRQLNNPALLAELTQVDVIADFRSRDVAAGGHGAPLAPAFHATVFGAPGETRVVCNLGGISNITILPGEGGDVRGFDCGPANALLDEWATRHLGKPYDDGGKFAARGTVHAPLLDALLDEPYFAAAPPKSTGRDLFNPGWLDAKLAAFVQVAPQDVQATLTALTAVSVAREVATHASGCKALFVCGGGARNPVLLDALRHALHEAGVLASVDTTAALGVPPQQVEALAFAWLAYRFTGREPGNLATVTGAAGNRVLGALYPR</sequence>
<accession>Q0BI88</accession>
<reference key="1">
    <citation type="submission" date="2006-08" db="EMBL/GenBank/DDBJ databases">
        <title>Complete sequence of chromosome 1 of Burkholderia cepacia AMMD.</title>
        <authorList>
            <person name="Copeland A."/>
            <person name="Lucas S."/>
            <person name="Lapidus A."/>
            <person name="Barry K."/>
            <person name="Detter J.C."/>
            <person name="Glavina del Rio T."/>
            <person name="Hammon N."/>
            <person name="Israni S."/>
            <person name="Pitluck S."/>
            <person name="Bruce D."/>
            <person name="Chain P."/>
            <person name="Malfatti S."/>
            <person name="Shin M."/>
            <person name="Vergez L."/>
            <person name="Schmutz J."/>
            <person name="Larimer F."/>
            <person name="Land M."/>
            <person name="Hauser L."/>
            <person name="Kyrpides N."/>
            <person name="Kim E."/>
            <person name="Parke J."/>
            <person name="Coenye T."/>
            <person name="Konstantinidis K."/>
            <person name="Ramette A."/>
            <person name="Tiedje J."/>
            <person name="Richardson P."/>
        </authorList>
    </citation>
    <scope>NUCLEOTIDE SEQUENCE [LARGE SCALE GENOMIC DNA]</scope>
    <source>
        <strain>ATCC BAA-244 / DSM 16087 / CCUG 44356 / LMG 19182 / AMMD</strain>
    </source>
</reference>
<proteinExistence type="inferred from homology"/>
<keyword id="KW-0067">ATP-binding</keyword>
<keyword id="KW-0119">Carbohydrate metabolism</keyword>
<keyword id="KW-0418">Kinase</keyword>
<keyword id="KW-0547">Nucleotide-binding</keyword>
<keyword id="KW-0808">Transferase</keyword>
<comment type="function">
    <text evidence="1">Catalyzes the specific phosphorylation of 1,6-anhydro-N-acetylmuramic acid (anhMurNAc) with the simultaneous cleavage of the 1,6-anhydro ring, generating MurNAc-6-P. Is required for the utilization of anhMurNAc either imported from the medium or derived from its own cell wall murein, and thus plays a role in cell wall recycling.</text>
</comment>
<comment type="catalytic activity">
    <reaction evidence="1">
        <text>1,6-anhydro-N-acetyl-beta-muramate + ATP + H2O = N-acetyl-D-muramate 6-phosphate + ADP + H(+)</text>
        <dbReference type="Rhea" id="RHEA:24952"/>
        <dbReference type="ChEBI" id="CHEBI:15377"/>
        <dbReference type="ChEBI" id="CHEBI:15378"/>
        <dbReference type="ChEBI" id="CHEBI:30616"/>
        <dbReference type="ChEBI" id="CHEBI:58690"/>
        <dbReference type="ChEBI" id="CHEBI:58722"/>
        <dbReference type="ChEBI" id="CHEBI:456216"/>
        <dbReference type="EC" id="2.7.1.170"/>
    </reaction>
</comment>
<comment type="pathway">
    <text evidence="1">Amino-sugar metabolism; 1,6-anhydro-N-acetylmuramate degradation.</text>
</comment>
<comment type="pathway">
    <text evidence="1">Cell wall biogenesis; peptidoglycan recycling.</text>
</comment>
<comment type="similarity">
    <text evidence="1">Belongs to the anhydro-N-acetylmuramic acid kinase family.</text>
</comment>
<evidence type="ECO:0000255" key="1">
    <source>
        <dbReference type="HAMAP-Rule" id="MF_01270"/>
    </source>
</evidence>
<dbReference type="EC" id="2.7.1.170" evidence="1"/>
<dbReference type="EMBL" id="CP000440">
    <property type="protein sequence ID" value="ABI86135.1"/>
    <property type="molecule type" value="Genomic_DNA"/>
</dbReference>
<dbReference type="RefSeq" id="WP_011655979.1">
    <property type="nucleotide sequence ID" value="NC_008390.1"/>
</dbReference>
<dbReference type="SMR" id="Q0BI88"/>
<dbReference type="GeneID" id="93084008"/>
<dbReference type="KEGG" id="bam:Bamb_0576"/>
<dbReference type="PATRIC" id="fig|339670.21.peg.1021"/>
<dbReference type="eggNOG" id="COG2377">
    <property type="taxonomic scope" value="Bacteria"/>
</dbReference>
<dbReference type="UniPathway" id="UPA00343"/>
<dbReference type="UniPathway" id="UPA00544"/>
<dbReference type="Proteomes" id="UP000000662">
    <property type="component" value="Chromosome 1"/>
</dbReference>
<dbReference type="GO" id="GO:0005524">
    <property type="term" value="F:ATP binding"/>
    <property type="evidence" value="ECO:0007669"/>
    <property type="project" value="UniProtKB-UniRule"/>
</dbReference>
<dbReference type="GO" id="GO:0016301">
    <property type="term" value="F:kinase activity"/>
    <property type="evidence" value="ECO:0007669"/>
    <property type="project" value="UniProtKB-KW"/>
</dbReference>
<dbReference type="GO" id="GO:0016773">
    <property type="term" value="F:phosphotransferase activity, alcohol group as acceptor"/>
    <property type="evidence" value="ECO:0007669"/>
    <property type="project" value="UniProtKB-UniRule"/>
</dbReference>
<dbReference type="GO" id="GO:0097175">
    <property type="term" value="P:1,6-anhydro-N-acetyl-beta-muramic acid catabolic process"/>
    <property type="evidence" value="ECO:0007669"/>
    <property type="project" value="UniProtKB-UniRule"/>
</dbReference>
<dbReference type="GO" id="GO:0006040">
    <property type="term" value="P:amino sugar metabolic process"/>
    <property type="evidence" value="ECO:0007669"/>
    <property type="project" value="InterPro"/>
</dbReference>
<dbReference type="GO" id="GO:0009254">
    <property type="term" value="P:peptidoglycan turnover"/>
    <property type="evidence" value="ECO:0007669"/>
    <property type="project" value="UniProtKB-UniRule"/>
</dbReference>
<dbReference type="CDD" id="cd24050">
    <property type="entry name" value="ASKHA_NBD_ANMK"/>
    <property type="match status" value="1"/>
</dbReference>
<dbReference type="Gene3D" id="3.30.420.40">
    <property type="match status" value="2"/>
</dbReference>
<dbReference type="HAMAP" id="MF_01270">
    <property type="entry name" value="AnhMurNAc_kinase"/>
    <property type="match status" value="1"/>
</dbReference>
<dbReference type="InterPro" id="IPR005338">
    <property type="entry name" value="Anhydro_N_Ac-Mur_kinase"/>
</dbReference>
<dbReference type="InterPro" id="IPR043129">
    <property type="entry name" value="ATPase_NBD"/>
</dbReference>
<dbReference type="NCBIfam" id="NF007139">
    <property type="entry name" value="PRK09585.1-3"/>
    <property type="match status" value="1"/>
</dbReference>
<dbReference type="NCBIfam" id="NF007140">
    <property type="entry name" value="PRK09585.1-4"/>
    <property type="match status" value="1"/>
</dbReference>
<dbReference type="PANTHER" id="PTHR30605">
    <property type="entry name" value="ANHYDRO-N-ACETYLMURAMIC ACID KINASE"/>
    <property type="match status" value="1"/>
</dbReference>
<dbReference type="PANTHER" id="PTHR30605:SF0">
    <property type="entry name" value="ANHYDRO-N-ACETYLMURAMIC ACID KINASE"/>
    <property type="match status" value="1"/>
</dbReference>
<dbReference type="Pfam" id="PF03702">
    <property type="entry name" value="AnmK"/>
    <property type="match status" value="1"/>
</dbReference>
<dbReference type="SUPFAM" id="SSF53067">
    <property type="entry name" value="Actin-like ATPase domain"/>
    <property type="match status" value="1"/>
</dbReference>
<gene>
    <name evidence="1" type="primary">anmK</name>
    <name type="ordered locus">Bamb_0576</name>
</gene>